<gene>
    <name evidence="8" type="primary">YAT2</name>
    <name type="ordered locus">YER024W</name>
</gene>
<feature type="initiator methionine" description="Removed" evidence="12">
    <location>
        <position position="1"/>
    </location>
</feature>
<feature type="chain" id="PRO_0000210176" description="Carnitine O-acetyltransferase YAT2">
    <location>
        <begin position="2"/>
        <end position="923"/>
    </location>
</feature>
<feature type="region of interest" description="Disordered" evidence="3">
    <location>
        <begin position="1"/>
        <end position="21"/>
    </location>
</feature>
<feature type="region of interest" description="Disordered" evidence="3">
    <location>
        <begin position="197"/>
        <end position="232"/>
    </location>
</feature>
<feature type="region of interest" description="Disordered" evidence="3">
    <location>
        <begin position="763"/>
        <end position="787"/>
    </location>
</feature>
<feature type="compositionally biased region" description="Polar residues" evidence="3">
    <location>
        <begin position="1"/>
        <end position="11"/>
    </location>
</feature>
<feature type="compositionally biased region" description="Basic and acidic residues" evidence="3">
    <location>
        <begin position="12"/>
        <end position="21"/>
    </location>
</feature>
<feature type="compositionally biased region" description="Acidic residues" evidence="3">
    <location>
        <begin position="204"/>
        <end position="219"/>
    </location>
</feature>
<feature type="compositionally biased region" description="Basic and acidic residues" evidence="3">
    <location>
        <begin position="220"/>
        <end position="232"/>
    </location>
</feature>
<feature type="compositionally biased region" description="Polar residues" evidence="3">
    <location>
        <begin position="774"/>
        <end position="787"/>
    </location>
</feature>
<feature type="binding site" evidence="2">
    <location>
        <begin position="529"/>
        <end position="541"/>
    </location>
    <ligand>
        <name>CoA</name>
        <dbReference type="ChEBI" id="CHEBI:57287"/>
    </ligand>
</feature>
<feature type="binding site" evidence="2">
    <location>
        <position position="567"/>
    </location>
    <ligand>
        <name>CoA</name>
        <dbReference type="ChEBI" id="CHEBI:57287"/>
    </ligand>
</feature>
<feature type="binding site" evidence="1">
    <location>
        <position position="576"/>
    </location>
    <ligand>
        <name>(R)-carnitine</name>
        <dbReference type="ChEBI" id="CHEBI:16347"/>
    </ligand>
</feature>
<feature type="modified residue" description="N-acetylserine" evidence="12">
    <location>
        <position position="2"/>
    </location>
</feature>
<feature type="modified residue" description="Phosphoserine" evidence="11">
    <location>
        <position position="783"/>
    </location>
</feature>
<evidence type="ECO:0000250" key="1">
    <source>
        <dbReference type="UniProtKB" id="P18886"/>
    </source>
</evidence>
<evidence type="ECO:0000250" key="2">
    <source>
        <dbReference type="UniProtKB" id="P28329"/>
    </source>
</evidence>
<evidence type="ECO:0000256" key="3">
    <source>
        <dbReference type="SAM" id="MobiDB-lite"/>
    </source>
</evidence>
<evidence type="ECO:0000269" key="4">
    <source>
    </source>
</evidence>
<evidence type="ECO:0000269" key="5">
    <source>
    </source>
</evidence>
<evidence type="ECO:0000269" key="6">
    <source>
    </source>
</evidence>
<evidence type="ECO:0000269" key="7">
    <source>
    </source>
</evidence>
<evidence type="ECO:0000303" key="8">
    <source>
    </source>
</evidence>
<evidence type="ECO:0000305" key="9"/>
<evidence type="ECO:0000305" key="10">
    <source>
    </source>
</evidence>
<evidence type="ECO:0007744" key="11">
    <source>
    </source>
</evidence>
<evidence type="ECO:0007744" key="12">
    <source>
    </source>
</evidence>
<comment type="function">
    <text evidence="4">Carnitine O-acetyltransferase involved in the shutteling of acetyl-CoA in the cell.</text>
</comment>
<comment type="catalytic activity">
    <reaction evidence="10">
        <text>(R)-carnitine + acetyl-CoA = O-acetyl-(R)-carnitine + CoA</text>
        <dbReference type="Rhea" id="RHEA:21136"/>
        <dbReference type="ChEBI" id="CHEBI:16347"/>
        <dbReference type="ChEBI" id="CHEBI:57287"/>
        <dbReference type="ChEBI" id="CHEBI:57288"/>
        <dbReference type="ChEBI" id="CHEBI:57589"/>
        <dbReference type="EC" id="2.3.1.7"/>
    </reaction>
</comment>
<comment type="interaction">
    <interactant intactId="EBI-2345299">
        <id>P40017</id>
    </interactant>
    <interactant intactId="EBI-3928">
        <id>P80235</id>
        <label>YAT1</label>
    </interactant>
    <organismsDiffer>false</organismsDiffer>
    <experiments>2</experiments>
</comment>
<comment type="subcellular location">
    <subcellularLocation>
        <location evidence="5 7">Cytoplasm</location>
    </subcellularLocation>
</comment>
<comment type="miscellaneous">
    <text evidence="6">Present with 319 molecules/cell in log phase SD medium.</text>
</comment>
<comment type="similarity">
    <text evidence="9">Belongs to the carnitine/choline acetyltransferase family.</text>
</comment>
<keyword id="KW-0007">Acetylation</keyword>
<keyword id="KW-0012">Acyltransferase</keyword>
<keyword id="KW-0963">Cytoplasm</keyword>
<keyword id="KW-0276">Fatty acid metabolism</keyword>
<keyword id="KW-0443">Lipid metabolism</keyword>
<keyword id="KW-0597">Phosphoprotein</keyword>
<keyword id="KW-1185">Reference proteome</keyword>
<keyword id="KW-0808">Transferase</keyword>
<keyword id="KW-0813">Transport</keyword>
<reference key="1">
    <citation type="journal article" date="1997" name="Nature">
        <title>The nucleotide sequence of Saccharomyces cerevisiae chromosome V.</title>
        <authorList>
            <person name="Dietrich F.S."/>
            <person name="Mulligan J.T."/>
            <person name="Hennessy K.M."/>
            <person name="Yelton M.A."/>
            <person name="Allen E."/>
            <person name="Araujo R."/>
            <person name="Aviles E."/>
            <person name="Berno A."/>
            <person name="Brennan T."/>
            <person name="Carpenter J."/>
            <person name="Chen E."/>
            <person name="Cherry J.M."/>
            <person name="Chung E."/>
            <person name="Duncan M."/>
            <person name="Guzman E."/>
            <person name="Hartzell G."/>
            <person name="Hunicke-Smith S."/>
            <person name="Hyman R.W."/>
            <person name="Kayser A."/>
            <person name="Komp C."/>
            <person name="Lashkari D."/>
            <person name="Lew H."/>
            <person name="Lin D."/>
            <person name="Mosedale D."/>
            <person name="Nakahara K."/>
            <person name="Namath A."/>
            <person name="Norgren R."/>
            <person name="Oefner P."/>
            <person name="Oh C."/>
            <person name="Petel F.X."/>
            <person name="Roberts D."/>
            <person name="Sehl P."/>
            <person name="Schramm S."/>
            <person name="Shogren T."/>
            <person name="Smith V."/>
            <person name="Taylor P."/>
            <person name="Wei Y."/>
            <person name="Botstein D."/>
            <person name="Davis R.W."/>
        </authorList>
    </citation>
    <scope>NUCLEOTIDE SEQUENCE [LARGE SCALE GENOMIC DNA]</scope>
    <source>
        <strain>ATCC 204508 / S288c</strain>
    </source>
</reference>
<reference key="2">
    <citation type="journal article" date="2014" name="G3 (Bethesda)">
        <title>The reference genome sequence of Saccharomyces cerevisiae: Then and now.</title>
        <authorList>
            <person name="Engel S.R."/>
            <person name="Dietrich F.S."/>
            <person name="Fisk D.G."/>
            <person name="Binkley G."/>
            <person name="Balakrishnan R."/>
            <person name="Costanzo M.C."/>
            <person name="Dwight S.S."/>
            <person name="Hitz B.C."/>
            <person name="Karra K."/>
            <person name="Nash R.S."/>
            <person name="Weng S."/>
            <person name="Wong E.D."/>
            <person name="Lloyd P."/>
            <person name="Skrzypek M.S."/>
            <person name="Miyasato S.R."/>
            <person name="Simison M."/>
            <person name="Cherry J.M."/>
        </authorList>
    </citation>
    <scope>GENOME REANNOTATION</scope>
    <source>
        <strain>ATCC 204508 / S288c</strain>
    </source>
</reference>
<reference key="3">
    <citation type="journal article" date="2001" name="Yeast">
        <title>Carnitine-dependent metabolic activities in Saccharomyces cerevisiae: three carnitine acetyltransferases are essential in a carnitine-dependent strain.</title>
        <authorList>
            <person name="Swiegers J.H."/>
            <person name="Dippenaar N."/>
            <person name="Pretorius I.S."/>
            <person name="Bauer F.F."/>
        </authorList>
    </citation>
    <scope>FUNCTION</scope>
</reference>
<reference key="4">
    <citation type="journal article" date="2003" name="Nature">
        <title>Global analysis of protein localization in budding yeast.</title>
        <authorList>
            <person name="Huh W.-K."/>
            <person name="Falvo J.V."/>
            <person name="Gerke L.C."/>
            <person name="Carroll A.S."/>
            <person name="Howson R.W."/>
            <person name="Weissman J.S."/>
            <person name="O'Shea E.K."/>
        </authorList>
    </citation>
    <scope>SUBCELLULAR LOCATION [LARGE SCALE ANALYSIS]</scope>
</reference>
<reference key="5">
    <citation type="journal article" date="2003" name="Nature">
        <title>Global analysis of protein expression in yeast.</title>
        <authorList>
            <person name="Ghaemmaghami S."/>
            <person name="Huh W.-K."/>
            <person name="Bower K."/>
            <person name="Howson R.W."/>
            <person name="Belle A."/>
            <person name="Dephoure N."/>
            <person name="O'Shea E.K."/>
            <person name="Weissman J.S."/>
        </authorList>
    </citation>
    <scope>LEVEL OF PROTEIN EXPRESSION [LARGE SCALE ANALYSIS]</scope>
</reference>
<reference key="6">
    <citation type="journal article" date="2008" name="Curr. Genet.">
        <title>Carnitine and carnitine acetyltransferases in the yeast Saccharomyces cerevisiae: a role for carnitine in stress protection.</title>
        <authorList>
            <person name="Franken J."/>
            <person name="Kroppenstedt S."/>
            <person name="Swiegers J.H."/>
            <person name="Bauer F.F."/>
        </authorList>
    </citation>
    <scope>SUBCELLULAR LOCATION</scope>
</reference>
<reference key="7">
    <citation type="journal article" date="2009" name="Science">
        <title>Global analysis of Cdk1 substrate phosphorylation sites provides insights into evolution.</title>
        <authorList>
            <person name="Holt L.J."/>
            <person name="Tuch B.B."/>
            <person name="Villen J."/>
            <person name="Johnson A.D."/>
            <person name="Gygi S.P."/>
            <person name="Morgan D.O."/>
        </authorList>
    </citation>
    <scope>PHOSPHORYLATION [LARGE SCALE ANALYSIS] AT SER-783</scope>
    <scope>IDENTIFICATION BY MASS SPECTROMETRY [LARGE SCALE ANALYSIS]</scope>
</reference>
<reference key="8">
    <citation type="journal article" date="2012" name="Proc. Natl. Acad. Sci. U.S.A.">
        <title>N-terminal acetylome analyses and functional insights of the N-terminal acetyltransferase NatB.</title>
        <authorList>
            <person name="Van Damme P."/>
            <person name="Lasa M."/>
            <person name="Polevoda B."/>
            <person name="Gazquez C."/>
            <person name="Elosegui-Artola A."/>
            <person name="Kim D.S."/>
            <person name="De Juan-Pardo E."/>
            <person name="Demeyer K."/>
            <person name="Hole K."/>
            <person name="Larrea E."/>
            <person name="Timmerman E."/>
            <person name="Prieto J."/>
            <person name="Arnesen T."/>
            <person name="Sherman F."/>
            <person name="Gevaert K."/>
            <person name="Aldabe R."/>
        </authorList>
    </citation>
    <scope>ACETYLATION [LARGE SCALE ANALYSIS] AT SER-2</scope>
    <scope>CLEAVAGE OF INITIATOR METHIONINE [LARGE SCALE ANALYSIS]</scope>
    <scope>IDENTIFICATION BY MASS SPECTROMETRY [LARGE SCALE ANALYSIS]</scope>
</reference>
<sequence>MSSGSTIVSSDKSGRTFKHEEELPKLPLPKLCDTLQRLKESLEPLYYADGYYQHPLDPEQIEKLSSIIRDFEENPVSEKLQSKLQSYHDTRDCYLDELHLDINNQTSTREIQDDVLPRNPFLVLADDALPNITQADRSAVLVHSAARFISALKQDLLPPDINATNGKPLSMAPFLNLFGTTRSPVFQRGEVENFDLNKPYTASDLEDPDYSSDEDDNDEPTQKDFDDRKRKHEEDIFTGNGITIKRHPDSKHILIISRGQYYTLEVLDSTNKIIYTAAELTTIFNHIIKDSSGIEKSTALGSLTSHSFRNWKYARKRLQKRYPNELHRIDSALFVLVLDESQEETTNDGDDTADISQMFNRTITERDKKCTSANCKRVFYGTSIINSKGHQVGSCVSRWYDKLQLVVTADAKATVIWDSFTCDGSVVLRFTSEIYTESVLRLARDVNAGDPQFSLWPNVTQMDPETKKLMTATISADGGGPSEIDPKLVVNKIDWSFSNILNTHVHLSETKLADLISKYDIVRASIPLGRRSAQRLGVKPDSMVQVALQIAHYALYGRMVFGLEPVSTRGFKNSRSSFINIQSQALLELCQLFISSSIDGTDKLDKFIQTCETHNNMVKHAKSGVGYEKHFNALKYLFKFHDHFGIHLSGDESSAAKDLFENPLVLPFSQPELIVANCGNAATTTFGITPAVPHGFGIGYIIKDDQVDLTVTSQFRQGDRLMFMLSWVLGEIRSYWRMSRGTSHNKTGVKISPVVDKLYEMDNAVNNPPKRNGHTVNGSRKTSSSSQVNLNRYGGFFDLEGHIDSRNISKTPSMKNLQKTFNGLTMSADNDHSSSAVSVPTEKEKLNTGHEILQIQPREVASNGLEADDETDIEIVAGNADGTSSSASSATSLNSKKRNVINSRFDIDFDRSRVGRKVATLDQ</sequence>
<name>YAT2_YEAST</name>
<proteinExistence type="evidence at protein level"/>
<dbReference type="EC" id="2.3.1.7" evidence="10"/>
<dbReference type="EMBL" id="U18778">
    <property type="protein sequence ID" value="AAB64557.1"/>
    <property type="molecule type" value="Genomic_DNA"/>
</dbReference>
<dbReference type="EMBL" id="BK006939">
    <property type="protein sequence ID" value="DAA07677.1"/>
    <property type="molecule type" value="Genomic_DNA"/>
</dbReference>
<dbReference type="PIR" id="S50482">
    <property type="entry name" value="S50482"/>
</dbReference>
<dbReference type="RefSeq" id="NP_010941.1">
    <property type="nucleotide sequence ID" value="NM_001178915.1"/>
</dbReference>
<dbReference type="SMR" id="P40017"/>
<dbReference type="BioGRID" id="36758">
    <property type="interactions" value="64"/>
</dbReference>
<dbReference type="FunCoup" id="P40017">
    <property type="interactions" value="97"/>
</dbReference>
<dbReference type="IntAct" id="P40017">
    <property type="interactions" value="5"/>
</dbReference>
<dbReference type="STRING" id="4932.YER024W"/>
<dbReference type="iPTMnet" id="P40017"/>
<dbReference type="PaxDb" id="4932-YER024W"/>
<dbReference type="PeptideAtlas" id="P40017"/>
<dbReference type="EnsemblFungi" id="YER024W_mRNA">
    <property type="protein sequence ID" value="YER024W"/>
    <property type="gene ID" value="YER024W"/>
</dbReference>
<dbReference type="GeneID" id="856745"/>
<dbReference type="KEGG" id="sce:YER024W"/>
<dbReference type="AGR" id="SGD:S000000826"/>
<dbReference type="SGD" id="S000000826">
    <property type="gene designation" value="YAT2"/>
</dbReference>
<dbReference type="VEuPathDB" id="FungiDB:YER024W"/>
<dbReference type="eggNOG" id="KOG3719">
    <property type="taxonomic scope" value="Eukaryota"/>
</dbReference>
<dbReference type="GeneTree" id="ENSGT01130000278324"/>
<dbReference type="HOGENOM" id="CLU_013513_4_1_1"/>
<dbReference type="InParanoid" id="P40017"/>
<dbReference type="OMA" id="YADGYYK"/>
<dbReference type="OrthoDB" id="240216at2759"/>
<dbReference type="BioCyc" id="YEAST:YER024W-MONOMER"/>
<dbReference type="BioGRID-ORCS" id="856745">
    <property type="hits" value="1 hit in 10 CRISPR screens"/>
</dbReference>
<dbReference type="CD-CODE" id="E03F929F">
    <property type="entry name" value="Stress granule"/>
</dbReference>
<dbReference type="PRO" id="PR:P40017"/>
<dbReference type="Proteomes" id="UP000002311">
    <property type="component" value="Chromosome V"/>
</dbReference>
<dbReference type="RNAct" id="P40017">
    <property type="molecule type" value="protein"/>
</dbReference>
<dbReference type="GO" id="GO:0005737">
    <property type="term" value="C:cytoplasm"/>
    <property type="evidence" value="ECO:0007005"/>
    <property type="project" value="SGD"/>
</dbReference>
<dbReference type="GO" id="GO:0005829">
    <property type="term" value="C:cytosol"/>
    <property type="evidence" value="ECO:0000314"/>
    <property type="project" value="SGD"/>
</dbReference>
<dbReference type="GO" id="GO:0004092">
    <property type="term" value="F:carnitine O-acetyltransferase activity"/>
    <property type="evidence" value="ECO:0000315"/>
    <property type="project" value="SGD"/>
</dbReference>
<dbReference type="GO" id="GO:0006066">
    <property type="term" value="P:alcohol metabolic process"/>
    <property type="evidence" value="ECO:0000315"/>
    <property type="project" value="SGD"/>
</dbReference>
<dbReference type="GO" id="GO:0009437">
    <property type="term" value="P:carnitine metabolic process"/>
    <property type="evidence" value="ECO:0000315"/>
    <property type="project" value="SGD"/>
</dbReference>
<dbReference type="GO" id="GO:0006631">
    <property type="term" value="P:fatty acid metabolic process"/>
    <property type="evidence" value="ECO:0007669"/>
    <property type="project" value="UniProtKB-KW"/>
</dbReference>
<dbReference type="FunFam" id="1.10.275.20:FF:000004">
    <property type="entry name" value="Yat2p"/>
    <property type="match status" value="1"/>
</dbReference>
<dbReference type="FunFam" id="3.30.559.70:FF:000012">
    <property type="entry name" value="Yat2p"/>
    <property type="match status" value="1"/>
</dbReference>
<dbReference type="Gene3D" id="3.30.559.10">
    <property type="entry name" value="Chloramphenicol acetyltransferase-like domain"/>
    <property type="match status" value="1"/>
</dbReference>
<dbReference type="Gene3D" id="1.10.275.20">
    <property type="entry name" value="Choline/Carnitine o-acyltransferase"/>
    <property type="match status" value="1"/>
</dbReference>
<dbReference type="Gene3D" id="3.30.559.70">
    <property type="entry name" value="Choline/Carnitine o-acyltransferase, domain 2"/>
    <property type="match status" value="1"/>
</dbReference>
<dbReference type="InterPro" id="IPR000542">
    <property type="entry name" value="Carn_acyl_trans"/>
</dbReference>
<dbReference type="InterPro" id="IPR042572">
    <property type="entry name" value="Carn_acyl_trans_N"/>
</dbReference>
<dbReference type="InterPro" id="IPR023213">
    <property type="entry name" value="CAT-like_dom_sf"/>
</dbReference>
<dbReference type="InterPro" id="IPR039551">
    <property type="entry name" value="Cho/carn_acyl_trans"/>
</dbReference>
<dbReference type="InterPro" id="IPR042231">
    <property type="entry name" value="Cho/carn_acyl_trans_2"/>
</dbReference>
<dbReference type="PANTHER" id="PTHR22589:SF48">
    <property type="entry name" value="CARNITINE O-ACETYLTRANSFERASE YAT2"/>
    <property type="match status" value="1"/>
</dbReference>
<dbReference type="PANTHER" id="PTHR22589">
    <property type="entry name" value="CARNITINE O-ACYLTRANSFERASE"/>
    <property type="match status" value="1"/>
</dbReference>
<dbReference type="Pfam" id="PF00755">
    <property type="entry name" value="Carn_acyltransf"/>
    <property type="match status" value="1"/>
</dbReference>
<dbReference type="SUPFAM" id="SSF52777">
    <property type="entry name" value="CoA-dependent acyltransferases"/>
    <property type="match status" value="2"/>
</dbReference>
<dbReference type="PROSITE" id="PS00439">
    <property type="entry name" value="ACYLTRANSF_C_1"/>
    <property type="match status" value="1"/>
</dbReference>
<dbReference type="PROSITE" id="PS00440">
    <property type="entry name" value="ACYLTRANSF_C_2"/>
    <property type="match status" value="1"/>
</dbReference>
<protein>
    <recommendedName>
        <fullName evidence="8">Carnitine O-acetyltransferase YAT2</fullName>
        <ecNumber evidence="10">2.3.1.7</ecNumber>
    </recommendedName>
</protein>
<organism>
    <name type="scientific">Saccharomyces cerevisiae (strain ATCC 204508 / S288c)</name>
    <name type="common">Baker's yeast</name>
    <dbReference type="NCBI Taxonomy" id="559292"/>
    <lineage>
        <taxon>Eukaryota</taxon>
        <taxon>Fungi</taxon>
        <taxon>Dikarya</taxon>
        <taxon>Ascomycota</taxon>
        <taxon>Saccharomycotina</taxon>
        <taxon>Saccharomycetes</taxon>
        <taxon>Saccharomycetales</taxon>
        <taxon>Saccharomycetaceae</taxon>
        <taxon>Saccharomyces</taxon>
    </lineage>
</organism>
<accession>P40017</accession>
<accession>D3DLS3</accession>